<protein>
    <recommendedName>
        <fullName>Cln5-like protein 1</fullName>
    </recommendedName>
</protein>
<evidence type="ECO:0000255" key="1"/>
<evidence type="ECO:0000305" key="2"/>
<name>CLN5A_DICDI</name>
<comment type="subcellular location">
    <subcellularLocation>
        <location evidence="2">Membrane</location>
        <topology evidence="2">Single-pass membrane protein</topology>
    </subcellularLocation>
</comment>
<comment type="similarity">
    <text evidence="2">Belongs to the CLN5 family.</text>
</comment>
<sequence length="378" mass="42307">MNKIIIFILFLISILQSVRGFTDTDEIVVLYLEAPLFFSKFGTLLANVNAFHSGLGFYSLNSNETYQVDFVAVPGVLESILPNKIENGEIIWNTSGKVQFSDSIDNTGYWSSEKEIMTINNEIFETFLCWAQNYNESLSYYQLFDVLNRNTNELLVKSVVCNDFVWAGFNALYNLGGKYINDSIIASRDIVTLYTRESIEYVQDGSTNIEVISFYEAMLNISIPKNQTINGLIEELDELFKGNFYLYVNGDYYNVTLDSSPFSFAYSESPLPIGERDLSNITLLESCHFQHSSDNDIILNNKNGIGGWIFIIILLSFTTVYLVGGILINKFKNEKSGLDLIPNKDSWSSLGGLISDGFGFIKSKATGSTSGGNGYSSI</sequence>
<gene>
    <name type="primary">cln5la</name>
    <name type="ORF">DDB_G0271546</name>
</gene>
<proteinExistence type="inferred from homology"/>
<organism>
    <name type="scientific">Dictyostelium discoideum</name>
    <name type="common">Social amoeba</name>
    <dbReference type="NCBI Taxonomy" id="44689"/>
    <lineage>
        <taxon>Eukaryota</taxon>
        <taxon>Amoebozoa</taxon>
        <taxon>Evosea</taxon>
        <taxon>Eumycetozoa</taxon>
        <taxon>Dictyostelia</taxon>
        <taxon>Dictyosteliales</taxon>
        <taxon>Dictyosteliaceae</taxon>
        <taxon>Dictyostelium</taxon>
    </lineage>
</organism>
<reference key="1">
    <citation type="journal article" date="2002" name="Nature">
        <title>Sequence and analysis of chromosome 2 of Dictyostelium discoideum.</title>
        <authorList>
            <person name="Gloeckner G."/>
            <person name="Eichinger L."/>
            <person name="Szafranski K."/>
            <person name="Pachebat J.A."/>
            <person name="Bankier A.T."/>
            <person name="Dear P.H."/>
            <person name="Lehmann R."/>
            <person name="Baumgart C."/>
            <person name="Parra G."/>
            <person name="Abril J.F."/>
            <person name="Guigo R."/>
            <person name="Kumpf K."/>
            <person name="Tunggal B."/>
            <person name="Cox E.C."/>
            <person name="Quail M.A."/>
            <person name="Platzer M."/>
            <person name="Rosenthal A."/>
            <person name="Noegel A.A."/>
        </authorList>
    </citation>
    <scope>NUCLEOTIDE SEQUENCE [LARGE SCALE GENOMIC DNA]</scope>
    <source>
        <strain>AX4</strain>
    </source>
</reference>
<reference key="2">
    <citation type="journal article" date="2005" name="Nature">
        <title>The genome of the social amoeba Dictyostelium discoideum.</title>
        <authorList>
            <person name="Eichinger L."/>
            <person name="Pachebat J.A."/>
            <person name="Gloeckner G."/>
            <person name="Rajandream M.A."/>
            <person name="Sucgang R."/>
            <person name="Berriman M."/>
            <person name="Song J."/>
            <person name="Olsen R."/>
            <person name="Szafranski K."/>
            <person name="Xu Q."/>
            <person name="Tunggal B."/>
            <person name="Kummerfeld S."/>
            <person name="Madera M."/>
            <person name="Konfortov B.A."/>
            <person name="Rivero F."/>
            <person name="Bankier A.T."/>
            <person name="Lehmann R."/>
            <person name="Hamlin N."/>
            <person name="Davies R."/>
            <person name="Gaudet P."/>
            <person name="Fey P."/>
            <person name="Pilcher K."/>
            <person name="Chen G."/>
            <person name="Saunders D."/>
            <person name="Sodergren E.J."/>
            <person name="Davis P."/>
            <person name="Kerhornou A."/>
            <person name="Nie X."/>
            <person name="Hall N."/>
            <person name="Anjard C."/>
            <person name="Hemphill L."/>
            <person name="Bason N."/>
            <person name="Farbrother P."/>
            <person name="Desany B."/>
            <person name="Just E."/>
            <person name="Morio T."/>
            <person name="Rost R."/>
            <person name="Churcher C.M."/>
            <person name="Cooper J."/>
            <person name="Haydock S."/>
            <person name="van Driessche N."/>
            <person name="Cronin A."/>
            <person name="Goodhead I."/>
            <person name="Muzny D.M."/>
            <person name="Mourier T."/>
            <person name="Pain A."/>
            <person name="Lu M."/>
            <person name="Harper D."/>
            <person name="Lindsay R."/>
            <person name="Hauser H."/>
            <person name="James K.D."/>
            <person name="Quiles M."/>
            <person name="Madan Babu M."/>
            <person name="Saito T."/>
            <person name="Buchrieser C."/>
            <person name="Wardroper A."/>
            <person name="Felder M."/>
            <person name="Thangavelu M."/>
            <person name="Johnson D."/>
            <person name="Knights A."/>
            <person name="Loulseged H."/>
            <person name="Mungall K.L."/>
            <person name="Oliver K."/>
            <person name="Price C."/>
            <person name="Quail M.A."/>
            <person name="Urushihara H."/>
            <person name="Hernandez J."/>
            <person name="Rabbinowitsch E."/>
            <person name="Steffen D."/>
            <person name="Sanders M."/>
            <person name="Ma J."/>
            <person name="Kohara Y."/>
            <person name="Sharp S."/>
            <person name="Simmonds M.N."/>
            <person name="Spiegler S."/>
            <person name="Tivey A."/>
            <person name="Sugano S."/>
            <person name="White B."/>
            <person name="Walker D."/>
            <person name="Woodward J.R."/>
            <person name="Winckler T."/>
            <person name="Tanaka Y."/>
            <person name="Shaulsky G."/>
            <person name="Schleicher M."/>
            <person name="Weinstock G.M."/>
            <person name="Rosenthal A."/>
            <person name="Cox E.C."/>
            <person name="Chisholm R.L."/>
            <person name="Gibbs R.A."/>
            <person name="Loomis W.F."/>
            <person name="Platzer M."/>
            <person name="Kay R.R."/>
            <person name="Williams J.G."/>
            <person name="Dear P.H."/>
            <person name="Noegel A.A."/>
            <person name="Barrell B.G."/>
            <person name="Kuspa A."/>
        </authorList>
    </citation>
    <scope>NUCLEOTIDE SEQUENCE [LARGE SCALE GENOMIC DNA]</scope>
    <source>
        <strain>AX4</strain>
    </source>
</reference>
<accession>Q86JG6</accession>
<accession>Q55AV4</accession>
<dbReference type="EMBL" id="AAFI02000006">
    <property type="protein sequence ID" value="EAL71637.1"/>
    <property type="molecule type" value="Genomic_DNA"/>
</dbReference>
<dbReference type="RefSeq" id="XP_645592.1">
    <property type="nucleotide sequence ID" value="XM_640500.1"/>
</dbReference>
<dbReference type="SMR" id="Q86JG6"/>
<dbReference type="FunCoup" id="Q86JG6">
    <property type="interactions" value="4"/>
</dbReference>
<dbReference type="GlyCosmos" id="Q86JG6">
    <property type="glycosylation" value="8 sites, No reported glycans"/>
</dbReference>
<dbReference type="GlyGen" id="Q86JG6">
    <property type="glycosylation" value="8 sites"/>
</dbReference>
<dbReference type="PaxDb" id="44689-DDB0168413"/>
<dbReference type="EnsemblProtists" id="EAL71637">
    <property type="protein sequence ID" value="EAL71637"/>
    <property type="gene ID" value="DDB_G0271546"/>
</dbReference>
<dbReference type="GeneID" id="8618047"/>
<dbReference type="KEGG" id="ddi:DDB_G0271546"/>
<dbReference type="dictyBase" id="DDB_G0271546"/>
<dbReference type="VEuPathDB" id="AmoebaDB:DDB_G0271546"/>
<dbReference type="eggNOG" id="ENOG502RBPB">
    <property type="taxonomic scope" value="Eukaryota"/>
</dbReference>
<dbReference type="HOGENOM" id="CLU_062132_0_0_1"/>
<dbReference type="InParanoid" id="Q86JG6"/>
<dbReference type="OMA" id="ICNDFVW"/>
<dbReference type="PhylomeDB" id="Q86JG6"/>
<dbReference type="PRO" id="PR:Q86JG6"/>
<dbReference type="Proteomes" id="UP000002195">
    <property type="component" value="Chromosome 2"/>
</dbReference>
<dbReference type="GO" id="GO:0005765">
    <property type="term" value="C:lysosomal membrane"/>
    <property type="evidence" value="ECO:0000318"/>
    <property type="project" value="GO_Central"/>
</dbReference>
<dbReference type="GO" id="GO:0016798">
    <property type="term" value="F:hydrolase activity, acting on glycosyl bonds"/>
    <property type="evidence" value="ECO:0000318"/>
    <property type="project" value="GO_Central"/>
</dbReference>
<dbReference type="GO" id="GO:0007040">
    <property type="term" value="P:lysosome organization"/>
    <property type="evidence" value="ECO:0000318"/>
    <property type="project" value="GO_Central"/>
</dbReference>
<dbReference type="InterPro" id="IPR018939">
    <property type="entry name" value="Autophagy-rel_prot_27"/>
</dbReference>
<dbReference type="InterPro" id="IPR026138">
    <property type="entry name" value="CLN5"/>
</dbReference>
<dbReference type="PANTHER" id="PTHR15380">
    <property type="entry name" value="CEROID-LIPOFUSCINOSIS, NEURONAL 5"/>
    <property type="match status" value="1"/>
</dbReference>
<dbReference type="PANTHER" id="PTHR15380:SF1">
    <property type="entry name" value="CLN5-LIKE PROTEIN 1-RELATED"/>
    <property type="match status" value="1"/>
</dbReference>
<dbReference type="Pfam" id="PF09451">
    <property type="entry name" value="ATG27"/>
    <property type="match status" value="1"/>
</dbReference>
<dbReference type="Pfam" id="PF15014">
    <property type="entry name" value="CLN5"/>
    <property type="match status" value="1"/>
</dbReference>
<keyword id="KW-0325">Glycoprotein</keyword>
<keyword id="KW-0472">Membrane</keyword>
<keyword id="KW-1185">Reference proteome</keyword>
<keyword id="KW-0732">Signal</keyword>
<keyword id="KW-0812">Transmembrane</keyword>
<keyword id="KW-1133">Transmembrane helix</keyword>
<feature type="signal peptide" evidence="1">
    <location>
        <begin position="1"/>
        <end position="20"/>
    </location>
</feature>
<feature type="chain" id="PRO_0000330474" description="Cln5-like protein 1">
    <location>
        <begin position="21"/>
        <end position="378"/>
    </location>
</feature>
<feature type="transmembrane region" description="Helical" evidence="1">
    <location>
        <begin position="308"/>
        <end position="328"/>
    </location>
</feature>
<feature type="glycosylation site" description="N-linked (GlcNAc...) asparagine" evidence="1">
    <location>
        <position position="63"/>
    </location>
</feature>
<feature type="glycosylation site" description="N-linked (GlcNAc...) asparagine" evidence="1">
    <location>
        <position position="93"/>
    </location>
</feature>
<feature type="glycosylation site" description="N-linked (GlcNAc...) asparagine" evidence="1">
    <location>
        <position position="135"/>
    </location>
</feature>
<feature type="glycosylation site" description="N-linked (GlcNAc...) asparagine" evidence="1">
    <location>
        <position position="181"/>
    </location>
</feature>
<feature type="glycosylation site" description="N-linked (GlcNAc...) asparagine" evidence="1">
    <location>
        <position position="220"/>
    </location>
</feature>
<feature type="glycosylation site" description="N-linked (GlcNAc...) asparagine" evidence="1">
    <location>
        <position position="226"/>
    </location>
</feature>
<feature type="glycosylation site" description="N-linked (GlcNAc...) asparagine" evidence="1">
    <location>
        <position position="254"/>
    </location>
</feature>
<feature type="glycosylation site" description="N-linked (GlcNAc...) asparagine" evidence="1">
    <location>
        <position position="280"/>
    </location>
</feature>